<dbReference type="EC" id="3.6.5.n1" evidence="1"/>
<dbReference type="EMBL" id="AM180252">
    <property type="protein sequence ID" value="CAJ54774.1"/>
    <property type="molecule type" value="Genomic_DNA"/>
</dbReference>
<dbReference type="SMR" id="Q1MQF3"/>
<dbReference type="STRING" id="363253.LI0720"/>
<dbReference type="KEGG" id="lip:LI0720"/>
<dbReference type="eggNOG" id="COG0481">
    <property type="taxonomic scope" value="Bacteria"/>
</dbReference>
<dbReference type="HOGENOM" id="CLU_009995_3_3_7"/>
<dbReference type="Proteomes" id="UP000002430">
    <property type="component" value="Chromosome"/>
</dbReference>
<dbReference type="GO" id="GO:0005886">
    <property type="term" value="C:plasma membrane"/>
    <property type="evidence" value="ECO:0007669"/>
    <property type="project" value="UniProtKB-SubCell"/>
</dbReference>
<dbReference type="GO" id="GO:0005525">
    <property type="term" value="F:GTP binding"/>
    <property type="evidence" value="ECO:0007669"/>
    <property type="project" value="UniProtKB-UniRule"/>
</dbReference>
<dbReference type="GO" id="GO:0003924">
    <property type="term" value="F:GTPase activity"/>
    <property type="evidence" value="ECO:0007669"/>
    <property type="project" value="UniProtKB-UniRule"/>
</dbReference>
<dbReference type="GO" id="GO:0043022">
    <property type="term" value="F:ribosome binding"/>
    <property type="evidence" value="ECO:0007669"/>
    <property type="project" value="UniProtKB-UniRule"/>
</dbReference>
<dbReference type="GO" id="GO:0003746">
    <property type="term" value="F:translation elongation factor activity"/>
    <property type="evidence" value="ECO:0007669"/>
    <property type="project" value="UniProtKB-UniRule"/>
</dbReference>
<dbReference type="GO" id="GO:0045727">
    <property type="term" value="P:positive regulation of translation"/>
    <property type="evidence" value="ECO:0007669"/>
    <property type="project" value="UniProtKB-UniRule"/>
</dbReference>
<dbReference type="CDD" id="cd03699">
    <property type="entry name" value="EF4_II"/>
    <property type="match status" value="1"/>
</dbReference>
<dbReference type="CDD" id="cd16260">
    <property type="entry name" value="EF4_III"/>
    <property type="match status" value="1"/>
</dbReference>
<dbReference type="CDD" id="cd01890">
    <property type="entry name" value="LepA"/>
    <property type="match status" value="1"/>
</dbReference>
<dbReference type="CDD" id="cd03709">
    <property type="entry name" value="lepA_C"/>
    <property type="match status" value="1"/>
</dbReference>
<dbReference type="FunFam" id="3.40.50.300:FF:000078">
    <property type="entry name" value="Elongation factor 4"/>
    <property type="match status" value="1"/>
</dbReference>
<dbReference type="FunFam" id="2.40.30.10:FF:000015">
    <property type="entry name" value="Translation factor GUF1, mitochondrial"/>
    <property type="match status" value="1"/>
</dbReference>
<dbReference type="FunFam" id="3.30.70.240:FF:000007">
    <property type="entry name" value="Translation factor GUF1, mitochondrial"/>
    <property type="match status" value="1"/>
</dbReference>
<dbReference type="FunFam" id="3.30.70.2570:FF:000001">
    <property type="entry name" value="Translation factor GUF1, mitochondrial"/>
    <property type="match status" value="1"/>
</dbReference>
<dbReference type="FunFam" id="3.30.70.870:FF:000004">
    <property type="entry name" value="Translation factor GUF1, mitochondrial"/>
    <property type="match status" value="1"/>
</dbReference>
<dbReference type="Gene3D" id="3.30.70.240">
    <property type="match status" value="1"/>
</dbReference>
<dbReference type="Gene3D" id="3.30.70.2570">
    <property type="entry name" value="Elongation factor 4, C-terminal domain"/>
    <property type="match status" value="1"/>
</dbReference>
<dbReference type="Gene3D" id="3.30.70.870">
    <property type="entry name" value="Elongation Factor G (Translational Gtpase), domain 3"/>
    <property type="match status" value="1"/>
</dbReference>
<dbReference type="Gene3D" id="3.40.50.300">
    <property type="entry name" value="P-loop containing nucleotide triphosphate hydrolases"/>
    <property type="match status" value="1"/>
</dbReference>
<dbReference type="Gene3D" id="2.40.30.10">
    <property type="entry name" value="Translation factors"/>
    <property type="match status" value="1"/>
</dbReference>
<dbReference type="HAMAP" id="MF_00071">
    <property type="entry name" value="LepA"/>
    <property type="match status" value="1"/>
</dbReference>
<dbReference type="InterPro" id="IPR006297">
    <property type="entry name" value="EF-4"/>
</dbReference>
<dbReference type="InterPro" id="IPR041095">
    <property type="entry name" value="EFG_II"/>
</dbReference>
<dbReference type="InterPro" id="IPR035647">
    <property type="entry name" value="EFG_III/V"/>
</dbReference>
<dbReference type="InterPro" id="IPR000640">
    <property type="entry name" value="EFG_V-like"/>
</dbReference>
<dbReference type="InterPro" id="IPR004161">
    <property type="entry name" value="EFTu-like_2"/>
</dbReference>
<dbReference type="InterPro" id="IPR031157">
    <property type="entry name" value="G_TR_CS"/>
</dbReference>
<dbReference type="InterPro" id="IPR038363">
    <property type="entry name" value="LepA_C_sf"/>
</dbReference>
<dbReference type="InterPro" id="IPR013842">
    <property type="entry name" value="LepA_CTD"/>
</dbReference>
<dbReference type="InterPro" id="IPR035654">
    <property type="entry name" value="LepA_IV"/>
</dbReference>
<dbReference type="InterPro" id="IPR027417">
    <property type="entry name" value="P-loop_NTPase"/>
</dbReference>
<dbReference type="InterPro" id="IPR005225">
    <property type="entry name" value="Small_GTP-bd"/>
</dbReference>
<dbReference type="InterPro" id="IPR000795">
    <property type="entry name" value="T_Tr_GTP-bd_dom"/>
</dbReference>
<dbReference type="NCBIfam" id="TIGR01393">
    <property type="entry name" value="lepA"/>
    <property type="match status" value="1"/>
</dbReference>
<dbReference type="NCBIfam" id="TIGR00231">
    <property type="entry name" value="small_GTP"/>
    <property type="match status" value="1"/>
</dbReference>
<dbReference type="PANTHER" id="PTHR43512:SF4">
    <property type="entry name" value="TRANSLATION FACTOR GUF1 HOMOLOG, CHLOROPLASTIC"/>
    <property type="match status" value="1"/>
</dbReference>
<dbReference type="PANTHER" id="PTHR43512">
    <property type="entry name" value="TRANSLATION FACTOR GUF1-RELATED"/>
    <property type="match status" value="1"/>
</dbReference>
<dbReference type="Pfam" id="PF00679">
    <property type="entry name" value="EFG_C"/>
    <property type="match status" value="1"/>
</dbReference>
<dbReference type="Pfam" id="PF14492">
    <property type="entry name" value="EFG_III"/>
    <property type="match status" value="1"/>
</dbReference>
<dbReference type="Pfam" id="PF00009">
    <property type="entry name" value="GTP_EFTU"/>
    <property type="match status" value="1"/>
</dbReference>
<dbReference type="Pfam" id="PF03144">
    <property type="entry name" value="GTP_EFTU_D2"/>
    <property type="match status" value="1"/>
</dbReference>
<dbReference type="Pfam" id="PF06421">
    <property type="entry name" value="LepA_C"/>
    <property type="match status" value="1"/>
</dbReference>
<dbReference type="PRINTS" id="PR00315">
    <property type="entry name" value="ELONGATNFCT"/>
</dbReference>
<dbReference type="SMART" id="SM00838">
    <property type="entry name" value="EFG_C"/>
    <property type="match status" value="1"/>
</dbReference>
<dbReference type="SUPFAM" id="SSF54980">
    <property type="entry name" value="EF-G C-terminal domain-like"/>
    <property type="match status" value="2"/>
</dbReference>
<dbReference type="SUPFAM" id="SSF52540">
    <property type="entry name" value="P-loop containing nucleoside triphosphate hydrolases"/>
    <property type="match status" value="1"/>
</dbReference>
<dbReference type="PROSITE" id="PS00301">
    <property type="entry name" value="G_TR_1"/>
    <property type="match status" value="1"/>
</dbReference>
<dbReference type="PROSITE" id="PS51722">
    <property type="entry name" value="G_TR_2"/>
    <property type="match status" value="1"/>
</dbReference>
<protein>
    <recommendedName>
        <fullName evidence="1">Elongation factor 4</fullName>
        <shortName evidence="1">EF-4</shortName>
        <ecNumber evidence="1">3.6.5.n1</ecNumber>
    </recommendedName>
    <alternativeName>
        <fullName evidence="1">Ribosomal back-translocase LepA</fullName>
    </alternativeName>
</protein>
<proteinExistence type="inferred from homology"/>
<evidence type="ECO:0000255" key="1">
    <source>
        <dbReference type="HAMAP-Rule" id="MF_00071"/>
    </source>
</evidence>
<comment type="function">
    <text evidence="1">Required for accurate and efficient protein synthesis under certain stress conditions. May act as a fidelity factor of the translation reaction, by catalyzing a one-codon backward translocation of tRNAs on improperly translocated ribosomes. Back-translocation proceeds from a post-translocation (POST) complex to a pre-translocation (PRE) complex, thus giving elongation factor G a second chance to translocate the tRNAs correctly. Binds to ribosomes in a GTP-dependent manner.</text>
</comment>
<comment type="catalytic activity">
    <reaction evidence="1">
        <text>GTP + H2O = GDP + phosphate + H(+)</text>
        <dbReference type="Rhea" id="RHEA:19669"/>
        <dbReference type="ChEBI" id="CHEBI:15377"/>
        <dbReference type="ChEBI" id="CHEBI:15378"/>
        <dbReference type="ChEBI" id="CHEBI:37565"/>
        <dbReference type="ChEBI" id="CHEBI:43474"/>
        <dbReference type="ChEBI" id="CHEBI:58189"/>
        <dbReference type="EC" id="3.6.5.n1"/>
    </reaction>
</comment>
<comment type="subcellular location">
    <subcellularLocation>
        <location evidence="1">Cell membrane</location>
        <topology evidence="1">Peripheral membrane protein</topology>
        <orientation evidence="1">Cytoplasmic side</orientation>
    </subcellularLocation>
</comment>
<comment type="similarity">
    <text evidence="1">Belongs to the TRAFAC class translation factor GTPase superfamily. Classic translation factor GTPase family. LepA subfamily.</text>
</comment>
<sequence length="606" mass="67905">MKDLLMPIQENIRNFSIIAHIDHGKSTLADRILEYTNLVSDREKRDQYLDKMELERERGITIKAQTVRIPYITADGKTYILNLIDTPGHVDFNYEVSRSLSACEGSLLVIDTTQGVEAQTLANVYLALEHNHEVIPILNKIDLPSADIEKVKAEIEETIGLDCSTAISISAKTGLGVDSVLEAIVQQLPAPKGDPNNPLKALIFDSWYDAYQGVVVLFRIMDGTIKKNDIIKLFSTEKSYEITRLGVFSPEAIDIPQLSAGEVGFLCGNIKTLGDAKVGDTITLLHNPCTKAIPGFKEIQPVVFCGLYPSESSDYDILKAALEKLQLNDAAFSWEPETSQALGFGFRCGFLGLLHMEIIQERLEREFQVELIATAPSVIYKVETTDGKIQEIDNPSKLPELGKIVHLYEPYVHIDIHVPSEFVGNVLKLCEEKRGIQKNIAYPAQQRVIITYELPFSEIVFDFFDRLKSATKGYASMDYEVIDYRISNLVRLDILLNGEPVDALAVIVHRDKAYHYGRSLAIKLKKTIPRQMFEVAIQAAIGQKVIARESISALRKNVTAKCYGGDITRKRKLLEKQKEGKKRMKRMGNVELPQEAFLAALQMGDD</sequence>
<name>LEPA_LAWIP</name>
<feature type="chain" id="PRO_0000265670" description="Elongation factor 4">
    <location>
        <begin position="1"/>
        <end position="606"/>
    </location>
</feature>
<feature type="domain" description="tr-type G">
    <location>
        <begin position="10"/>
        <end position="192"/>
    </location>
</feature>
<feature type="binding site" evidence="1">
    <location>
        <begin position="22"/>
        <end position="27"/>
    </location>
    <ligand>
        <name>GTP</name>
        <dbReference type="ChEBI" id="CHEBI:37565"/>
    </ligand>
</feature>
<feature type="binding site" evidence="1">
    <location>
        <begin position="139"/>
        <end position="142"/>
    </location>
    <ligand>
        <name>GTP</name>
        <dbReference type="ChEBI" id="CHEBI:37565"/>
    </ligand>
</feature>
<reference key="1">
    <citation type="submission" date="2005-11" db="EMBL/GenBank/DDBJ databases">
        <title>The complete genome sequence of Lawsonia intracellularis: the causative agent of proliferative enteropathy.</title>
        <authorList>
            <person name="Kaur K."/>
            <person name="Zhang Q."/>
            <person name="Beckler D."/>
            <person name="Munir S."/>
            <person name="Li L."/>
            <person name="Kinsley K."/>
            <person name="Herron L."/>
            <person name="Peterson A."/>
            <person name="May B."/>
            <person name="Singh S."/>
            <person name="Gebhart C."/>
            <person name="Kapur V."/>
        </authorList>
    </citation>
    <scope>NUCLEOTIDE SEQUENCE [LARGE SCALE GENOMIC DNA]</scope>
    <source>
        <strain>PHE/MN1-00</strain>
    </source>
</reference>
<organism>
    <name type="scientific">Lawsonia intracellularis (strain PHE/MN1-00)</name>
    <dbReference type="NCBI Taxonomy" id="363253"/>
    <lineage>
        <taxon>Bacteria</taxon>
        <taxon>Pseudomonadati</taxon>
        <taxon>Thermodesulfobacteriota</taxon>
        <taxon>Desulfovibrionia</taxon>
        <taxon>Desulfovibrionales</taxon>
        <taxon>Desulfovibrionaceae</taxon>
        <taxon>Lawsonia</taxon>
    </lineage>
</organism>
<accession>Q1MQF3</accession>
<gene>
    <name evidence="1" type="primary">lepA</name>
    <name type="ordered locus">LI0720</name>
</gene>
<keyword id="KW-1003">Cell membrane</keyword>
<keyword id="KW-0342">GTP-binding</keyword>
<keyword id="KW-0378">Hydrolase</keyword>
<keyword id="KW-0472">Membrane</keyword>
<keyword id="KW-0547">Nucleotide-binding</keyword>
<keyword id="KW-0648">Protein biosynthesis</keyword>
<keyword id="KW-1185">Reference proteome</keyword>